<reference key="1">
    <citation type="journal article" date="2008" name="J. Bacteriol.">
        <title>Insights into plant cell wall degradation from the genome sequence of the soil bacterium Cellvibrio japonicus.</title>
        <authorList>
            <person name="DeBoy R.T."/>
            <person name="Mongodin E.F."/>
            <person name="Fouts D.E."/>
            <person name="Tailford L.E."/>
            <person name="Khouri H."/>
            <person name="Emerson J.B."/>
            <person name="Mohamoud Y."/>
            <person name="Watkins K."/>
            <person name="Henrissat B."/>
            <person name="Gilbert H.J."/>
            <person name="Nelson K.E."/>
        </authorList>
    </citation>
    <scope>NUCLEOTIDE SEQUENCE [LARGE SCALE GENOMIC DNA]</scope>
    <source>
        <strain>Ueda107</strain>
    </source>
</reference>
<organism>
    <name type="scientific">Cellvibrio japonicus (strain Ueda107)</name>
    <name type="common">Pseudomonas fluorescens subsp. cellulosa</name>
    <dbReference type="NCBI Taxonomy" id="498211"/>
    <lineage>
        <taxon>Bacteria</taxon>
        <taxon>Pseudomonadati</taxon>
        <taxon>Pseudomonadota</taxon>
        <taxon>Gammaproteobacteria</taxon>
        <taxon>Cellvibrionales</taxon>
        <taxon>Cellvibrionaceae</taxon>
        <taxon>Cellvibrio</taxon>
    </lineage>
</organism>
<keyword id="KW-1185">Reference proteome</keyword>
<keyword id="KW-0687">Ribonucleoprotein</keyword>
<keyword id="KW-0689">Ribosomal protein</keyword>
<keyword id="KW-0694">RNA-binding</keyword>
<keyword id="KW-0699">rRNA-binding</keyword>
<protein>
    <recommendedName>
        <fullName evidence="1">Small ribosomal subunit protein uS11</fullName>
    </recommendedName>
    <alternativeName>
        <fullName evidence="2">30S ribosomal protein S11</fullName>
    </alternativeName>
</protein>
<accession>B3PK60</accession>
<feature type="chain" id="PRO_1000141065" description="Small ribosomal subunit protein uS11">
    <location>
        <begin position="1"/>
        <end position="131"/>
    </location>
</feature>
<evidence type="ECO:0000255" key="1">
    <source>
        <dbReference type="HAMAP-Rule" id="MF_01310"/>
    </source>
</evidence>
<evidence type="ECO:0000305" key="2"/>
<proteinExistence type="inferred from homology"/>
<name>RS11_CELJU</name>
<dbReference type="EMBL" id="CP000934">
    <property type="protein sequence ID" value="ACE83526.1"/>
    <property type="molecule type" value="Genomic_DNA"/>
</dbReference>
<dbReference type="RefSeq" id="WP_012486385.1">
    <property type="nucleotide sequence ID" value="NC_010995.1"/>
</dbReference>
<dbReference type="SMR" id="B3PK60"/>
<dbReference type="STRING" id="498211.CJA_0722"/>
<dbReference type="KEGG" id="cja:CJA_0722"/>
<dbReference type="eggNOG" id="COG0100">
    <property type="taxonomic scope" value="Bacteria"/>
</dbReference>
<dbReference type="HOGENOM" id="CLU_072439_5_0_6"/>
<dbReference type="OrthoDB" id="9806415at2"/>
<dbReference type="Proteomes" id="UP000001036">
    <property type="component" value="Chromosome"/>
</dbReference>
<dbReference type="GO" id="GO:1990904">
    <property type="term" value="C:ribonucleoprotein complex"/>
    <property type="evidence" value="ECO:0007669"/>
    <property type="project" value="UniProtKB-KW"/>
</dbReference>
<dbReference type="GO" id="GO:0005840">
    <property type="term" value="C:ribosome"/>
    <property type="evidence" value="ECO:0007669"/>
    <property type="project" value="UniProtKB-KW"/>
</dbReference>
<dbReference type="GO" id="GO:0019843">
    <property type="term" value="F:rRNA binding"/>
    <property type="evidence" value="ECO:0007669"/>
    <property type="project" value="UniProtKB-UniRule"/>
</dbReference>
<dbReference type="GO" id="GO:0003735">
    <property type="term" value="F:structural constituent of ribosome"/>
    <property type="evidence" value="ECO:0007669"/>
    <property type="project" value="InterPro"/>
</dbReference>
<dbReference type="GO" id="GO:0006412">
    <property type="term" value="P:translation"/>
    <property type="evidence" value="ECO:0007669"/>
    <property type="project" value="UniProtKB-UniRule"/>
</dbReference>
<dbReference type="FunFam" id="3.30.420.80:FF:000001">
    <property type="entry name" value="30S ribosomal protein S11"/>
    <property type="match status" value="1"/>
</dbReference>
<dbReference type="Gene3D" id="3.30.420.80">
    <property type="entry name" value="Ribosomal protein S11"/>
    <property type="match status" value="1"/>
</dbReference>
<dbReference type="HAMAP" id="MF_01310">
    <property type="entry name" value="Ribosomal_uS11"/>
    <property type="match status" value="1"/>
</dbReference>
<dbReference type="InterPro" id="IPR001971">
    <property type="entry name" value="Ribosomal_uS11"/>
</dbReference>
<dbReference type="InterPro" id="IPR019981">
    <property type="entry name" value="Ribosomal_uS11_bac-type"/>
</dbReference>
<dbReference type="InterPro" id="IPR018102">
    <property type="entry name" value="Ribosomal_uS11_CS"/>
</dbReference>
<dbReference type="InterPro" id="IPR036967">
    <property type="entry name" value="Ribosomal_uS11_sf"/>
</dbReference>
<dbReference type="NCBIfam" id="NF003698">
    <property type="entry name" value="PRK05309.1"/>
    <property type="match status" value="1"/>
</dbReference>
<dbReference type="NCBIfam" id="TIGR03632">
    <property type="entry name" value="uS11_bact"/>
    <property type="match status" value="1"/>
</dbReference>
<dbReference type="PANTHER" id="PTHR11759">
    <property type="entry name" value="40S RIBOSOMAL PROTEIN S14/30S RIBOSOMAL PROTEIN S11"/>
    <property type="match status" value="1"/>
</dbReference>
<dbReference type="Pfam" id="PF00411">
    <property type="entry name" value="Ribosomal_S11"/>
    <property type="match status" value="1"/>
</dbReference>
<dbReference type="PIRSF" id="PIRSF002131">
    <property type="entry name" value="Ribosomal_S11"/>
    <property type="match status" value="1"/>
</dbReference>
<dbReference type="SUPFAM" id="SSF53137">
    <property type="entry name" value="Translational machinery components"/>
    <property type="match status" value="1"/>
</dbReference>
<dbReference type="PROSITE" id="PS00054">
    <property type="entry name" value="RIBOSOMAL_S11"/>
    <property type="match status" value="1"/>
</dbReference>
<gene>
    <name evidence="1" type="primary">rpsK</name>
    <name type="ordered locus">CJA_0722</name>
</gene>
<comment type="function">
    <text evidence="1">Located on the platform of the 30S subunit, it bridges several disparate RNA helices of the 16S rRNA. Forms part of the Shine-Dalgarno cleft in the 70S ribosome.</text>
</comment>
<comment type="subunit">
    <text evidence="1">Part of the 30S ribosomal subunit. Interacts with proteins S7 and S18. Binds to IF-3.</text>
</comment>
<comment type="similarity">
    <text evidence="1">Belongs to the universal ribosomal protein uS11 family.</text>
</comment>
<sequence>MAKPGNKTATKKKVKKTVIDGVAHIHASFNNTIVTITDRQGNALAWATSGGSGFRGSRKSTPFAAQVAAERAGEAAKEYGLKNLDVEVKGPGPGRESAVRALNNVGYKITNITDVTPIPHNGCRPPKKRRV</sequence>